<accession>Q5M5S8</accession>
<dbReference type="EMBL" id="CP000023">
    <property type="protein sequence ID" value="AAV60094.1"/>
    <property type="molecule type" value="Genomic_DNA"/>
</dbReference>
<dbReference type="RefSeq" id="WP_002949763.1">
    <property type="nucleotide sequence ID" value="NC_006448.1"/>
</dbReference>
<dbReference type="SMR" id="Q5M5S8"/>
<dbReference type="STRING" id="264199.stu0375"/>
<dbReference type="GeneID" id="66898300"/>
<dbReference type="KEGG" id="stl:stu0375"/>
<dbReference type="eggNOG" id="COG2137">
    <property type="taxonomic scope" value="Bacteria"/>
</dbReference>
<dbReference type="HOGENOM" id="CLU_066607_4_0_9"/>
<dbReference type="Proteomes" id="UP000001170">
    <property type="component" value="Chromosome"/>
</dbReference>
<dbReference type="GO" id="GO:0005737">
    <property type="term" value="C:cytoplasm"/>
    <property type="evidence" value="ECO:0007669"/>
    <property type="project" value="UniProtKB-SubCell"/>
</dbReference>
<dbReference type="GO" id="GO:0006282">
    <property type="term" value="P:regulation of DNA repair"/>
    <property type="evidence" value="ECO:0007669"/>
    <property type="project" value="UniProtKB-UniRule"/>
</dbReference>
<dbReference type="Gene3D" id="1.10.10.10">
    <property type="entry name" value="Winged helix-like DNA-binding domain superfamily/Winged helix DNA-binding domain"/>
    <property type="match status" value="4"/>
</dbReference>
<dbReference type="HAMAP" id="MF_01114">
    <property type="entry name" value="RecX"/>
    <property type="match status" value="1"/>
</dbReference>
<dbReference type="InterPro" id="IPR053926">
    <property type="entry name" value="RecX_HTH_1st"/>
</dbReference>
<dbReference type="InterPro" id="IPR053925">
    <property type="entry name" value="RecX_HTH_3rd"/>
</dbReference>
<dbReference type="InterPro" id="IPR003783">
    <property type="entry name" value="Regulatory_RecX"/>
</dbReference>
<dbReference type="InterPro" id="IPR036388">
    <property type="entry name" value="WH-like_DNA-bd_sf"/>
</dbReference>
<dbReference type="NCBIfam" id="NF010733">
    <property type="entry name" value="PRK14135.1"/>
    <property type="match status" value="1"/>
</dbReference>
<dbReference type="PANTHER" id="PTHR33602">
    <property type="entry name" value="REGULATORY PROTEIN RECX FAMILY PROTEIN"/>
    <property type="match status" value="1"/>
</dbReference>
<dbReference type="PANTHER" id="PTHR33602:SF1">
    <property type="entry name" value="REGULATORY PROTEIN RECX FAMILY PROTEIN"/>
    <property type="match status" value="1"/>
</dbReference>
<dbReference type="Pfam" id="PF21982">
    <property type="entry name" value="RecX_HTH1"/>
    <property type="match status" value="1"/>
</dbReference>
<dbReference type="Pfam" id="PF21981">
    <property type="entry name" value="RecX_HTH3"/>
    <property type="match status" value="1"/>
</dbReference>
<feature type="chain" id="PRO_1000065224" description="Regulatory protein RecX">
    <location>
        <begin position="1"/>
        <end position="258"/>
    </location>
</feature>
<reference key="1">
    <citation type="journal article" date="2004" name="Nat. Biotechnol.">
        <title>Complete sequence and comparative genome analysis of the dairy bacterium Streptococcus thermophilus.</title>
        <authorList>
            <person name="Bolotin A."/>
            <person name="Quinquis B."/>
            <person name="Renault P."/>
            <person name="Sorokin A."/>
            <person name="Ehrlich S.D."/>
            <person name="Kulakauskas S."/>
            <person name="Lapidus A."/>
            <person name="Goltsman E."/>
            <person name="Mazur M."/>
            <person name="Pusch G.D."/>
            <person name="Fonstein M."/>
            <person name="Overbeek R."/>
            <person name="Kyprides N."/>
            <person name="Purnelle B."/>
            <person name="Prozzi D."/>
            <person name="Ngui K."/>
            <person name="Masuy D."/>
            <person name="Hancy F."/>
            <person name="Burteau S."/>
            <person name="Boutry M."/>
            <person name="Delcour J."/>
            <person name="Goffeau A."/>
            <person name="Hols P."/>
        </authorList>
    </citation>
    <scope>NUCLEOTIDE SEQUENCE [LARGE SCALE GENOMIC DNA]</scope>
    <source>
        <strain>ATCC BAA-250 / LMG 18311</strain>
    </source>
</reference>
<protein>
    <recommendedName>
        <fullName evidence="1">Regulatory protein RecX</fullName>
    </recommendedName>
</protein>
<gene>
    <name evidence="1" type="primary">recX</name>
    <name type="ordered locus">stu0375</name>
</gene>
<keyword id="KW-0963">Cytoplasm</keyword>
<keyword id="KW-1185">Reference proteome</keyword>
<organism>
    <name type="scientific">Streptococcus thermophilus (strain ATCC BAA-250 / LMG 18311)</name>
    <dbReference type="NCBI Taxonomy" id="264199"/>
    <lineage>
        <taxon>Bacteria</taxon>
        <taxon>Bacillati</taxon>
        <taxon>Bacillota</taxon>
        <taxon>Bacilli</taxon>
        <taxon>Lactobacillales</taxon>
        <taxon>Streptococcaceae</taxon>
        <taxon>Streptococcus</taxon>
    </lineage>
</organism>
<proteinExistence type="inferred from homology"/>
<name>RECX_STRT2</name>
<evidence type="ECO:0000255" key="1">
    <source>
        <dbReference type="HAMAP-Rule" id="MF_01114"/>
    </source>
</evidence>
<sequence>MKITKIEKKKRLYLVEIDKKESLYVTEDTIVKYMLTKEMALSKDQLEDIKNFAQFSHGKNLALYFISFKQRTEKEVRDYLFKHEINPHIIPQIIDNLKKDHWIDDYKLLESLAQQNLNSGDKGAYALKQKWLQKGCEKQVIDEVLTQFDFSEVAIKVTSKLLRKYQGKLPTKSLKDKLIQNLINKGFSFQESKNAINQLELEADEENEQALLYKEIEKQYQKFSKKYDGYELKQHLTQSLFRKGYDFDAIASALREYF</sequence>
<comment type="function">
    <text evidence="1">Modulates RecA activity.</text>
</comment>
<comment type="subcellular location">
    <subcellularLocation>
        <location evidence="1">Cytoplasm</location>
    </subcellularLocation>
</comment>
<comment type="similarity">
    <text evidence="1">Belongs to the RecX family.</text>
</comment>